<reference key="1">
    <citation type="journal article" date="2006" name="J. Bacteriol.">
        <title>Pathogenomic sequence analysis of Bacillus cereus and Bacillus thuringiensis isolates closely related to Bacillus anthracis.</title>
        <authorList>
            <person name="Han C.S."/>
            <person name="Xie G."/>
            <person name="Challacombe J.F."/>
            <person name="Altherr M.R."/>
            <person name="Bhotika S.S."/>
            <person name="Bruce D."/>
            <person name="Campbell C.S."/>
            <person name="Campbell M.L."/>
            <person name="Chen J."/>
            <person name="Chertkov O."/>
            <person name="Cleland C."/>
            <person name="Dimitrijevic M."/>
            <person name="Doggett N.A."/>
            <person name="Fawcett J.J."/>
            <person name="Glavina T."/>
            <person name="Goodwin L.A."/>
            <person name="Hill K.K."/>
            <person name="Hitchcock P."/>
            <person name="Jackson P.J."/>
            <person name="Keim P."/>
            <person name="Kewalramani A.R."/>
            <person name="Longmire J."/>
            <person name="Lucas S."/>
            <person name="Malfatti S."/>
            <person name="McMurry K."/>
            <person name="Meincke L.J."/>
            <person name="Misra M."/>
            <person name="Moseman B.L."/>
            <person name="Mundt M."/>
            <person name="Munk A.C."/>
            <person name="Okinaka R.T."/>
            <person name="Parson-Quintana B."/>
            <person name="Reilly L.P."/>
            <person name="Richardson P."/>
            <person name="Robinson D.L."/>
            <person name="Rubin E."/>
            <person name="Saunders E."/>
            <person name="Tapia R."/>
            <person name="Tesmer J.G."/>
            <person name="Thayer N."/>
            <person name="Thompson L.S."/>
            <person name="Tice H."/>
            <person name="Ticknor L.O."/>
            <person name="Wills P.L."/>
            <person name="Brettin T.S."/>
            <person name="Gilna P."/>
        </authorList>
    </citation>
    <scope>NUCLEOTIDE SEQUENCE [LARGE SCALE GENOMIC DNA]</scope>
    <source>
        <strain>97-27</strain>
    </source>
</reference>
<sequence>MQQLIAEITKGQLKTDLPSFRPGDTLRVHVKVVEGTRERIQLFEGVVIKRRGGGISETFTVRKISYGVGVERTFPVHTPRIAKIEVLRRGKVRRAKLYYLRNLRGKKARIKEIR</sequence>
<proteinExistence type="inferred from homology"/>
<keyword id="KW-0687">Ribonucleoprotein</keyword>
<keyword id="KW-0689">Ribosomal protein</keyword>
<accession>Q6HEX5</accession>
<gene>
    <name evidence="1" type="primary">rplS</name>
    <name type="ordered locus">BT9727_3581</name>
</gene>
<name>RL19_BACHK</name>
<organism>
    <name type="scientific">Bacillus thuringiensis subsp. konkukian (strain 97-27)</name>
    <dbReference type="NCBI Taxonomy" id="281309"/>
    <lineage>
        <taxon>Bacteria</taxon>
        <taxon>Bacillati</taxon>
        <taxon>Bacillota</taxon>
        <taxon>Bacilli</taxon>
        <taxon>Bacillales</taxon>
        <taxon>Bacillaceae</taxon>
        <taxon>Bacillus</taxon>
        <taxon>Bacillus cereus group</taxon>
    </lineage>
</organism>
<evidence type="ECO:0000255" key="1">
    <source>
        <dbReference type="HAMAP-Rule" id="MF_00402"/>
    </source>
</evidence>
<evidence type="ECO:0000305" key="2"/>
<feature type="chain" id="PRO_0000163409" description="Large ribosomal subunit protein bL19">
    <location>
        <begin position="1"/>
        <end position="114"/>
    </location>
</feature>
<dbReference type="EMBL" id="AE017355">
    <property type="protein sequence ID" value="AAT61117.1"/>
    <property type="molecule type" value="Genomic_DNA"/>
</dbReference>
<dbReference type="RefSeq" id="WP_001186516.1">
    <property type="nucleotide sequence ID" value="NC_005957.1"/>
</dbReference>
<dbReference type="RefSeq" id="YP_037901.1">
    <property type="nucleotide sequence ID" value="NC_005957.1"/>
</dbReference>
<dbReference type="SMR" id="Q6HEX5"/>
<dbReference type="GeneID" id="93007272"/>
<dbReference type="KEGG" id="btk:BT9727_3581"/>
<dbReference type="PATRIC" id="fig|281309.8.peg.3819"/>
<dbReference type="HOGENOM" id="CLU_103507_2_1_9"/>
<dbReference type="PRO" id="PR:Q6HEX5"/>
<dbReference type="Proteomes" id="UP000001301">
    <property type="component" value="Chromosome"/>
</dbReference>
<dbReference type="GO" id="GO:0022625">
    <property type="term" value="C:cytosolic large ribosomal subunit"/>
    <property type="evidence" value="ECO:0007669"/>
    <property type="project" value="TreeGrafter"/>
</dbReference>
<dbReference type="GO" id="GO:0003735">
    <property type="term" value="F:structural constituent of ribosome"/>
    <property type="evidence" value="ECO:0007669"/>
    <property type="project" value="InterPro"/>
</dbReference>
<dbReference type="GO" id="GO:0006412">
    <property type="term" value="P:translation"/>
    <property type="evidence" value="ECO:0007669"/>
    <property type="project" value="UniProtKB-UniRule"/>
</dbReference>
<dbReference type="FunFam" id="2.30.30.790:FF:000001">
    <property type="entry name" value="50S ribosomal protein L19"/>
    <property type="match status" value="1"/>
</dbReference>
<dbReference type="Gene3D" id="2.30.30.790">
    <property type="match status" value="1"/>
</dbReference>
<dbReference type="HAMAP" id="MF_00402">
    <property type="entry name" value="Ribosomal_bL19"/>
    <property type="match status" value="1"/>
</dbReference>
<dbReference type="InterPro" id="IPR001857">
    <property type="entry name" value="Ribosomal_bL19"/>
</dbReference>
<dbReference type="InterPro" id="IPR018257">
    <property type="entry name" value="Ribosomal_bL19_CS"/>
</dbReference>
<dbReference type="InterPro" id="IPR038657">
    <property type="entry name" value="Ribosomal_bL19_sf"/>
</dbReference>
<dbReference type="InterPro" id="IPR008991">
    <property type="entry name" value="Translation_prot_SH3-like_sf"/>
</dbReference>
<dbReference type="NCBIfam" id="TIGR01024">
    <property type="entry name" value="rplS_bact"/>
    <property type="match status" value="1"/>
</dbReference>
<dbReference type="PANTHER" id="PTHR15680:SF9">
    <property type="entry name" value="LARGE RIBOSOMAL SUBUNIT PROTEIN BL19M"/>
    <property type="match status" value="1"/>
</dbReference>
<dbReference type="PANTHER" id="PTHR15680">
    <property type="entry name" value="RIBOSOMAL PROTEIN L19"/>
    <property type="match status" value="1"/>
</dbReference>
<dbReference type="Pfam" id="PF01245">
    <property type="entry name" value="Ribosomal_L19"/>
    <property type="match status" value="1"/>
</dbReference>
<dbReference type="PIRSF" id="PIRSF002191">
    <property type="entry name" value="Ribosomal_L19"/>
    <property type="match status" value="1"/>
</dbReference>
<dbReference type="PRINTS" id="PR00061">
    <property type="entry name" value="RIBOSOMALL19"/>
</dbReference>
<dbReference type="SUPFAM" id="SSF50104">
    <property type="entry name" value="Translation proteins SH3-like domain"/>
    <property type="match status" value="1"/>
</dbReference>
<dbReference type="PROSITE" id="PS01015">
    <property type="entry name" value="RIBOSOMAL_L19"/>
    <property type="match status" value="1"/>
</dbReference>
<comment type="function">
    <text evidence="1">This protein is located at the 30S-50S ribosomal subunit interface and may play a role in the structure and function of the aminoacyl-tRNA binding site.</text>
</comment>
<comment type="similarity">
    <text evidence="1">Belongs to the bacterial ribosomal protein bL19 family.</text>
</comment>
<protein>
    <recommendedName>
        <fullName evidence="1">Large ribosomal subunit protein bL19</fullName>
    </recommendedName>
    <alternativeName>
        <fullName evidence="2">50S ribosomal protein L19</fullName>
    </alternativeName>
</protein>